<keyword id="KW-0165">Cleavage on pair of basic residues</keyword>
<keyword id="KW-1015">Disulfide bond</keyword>
<keyword id="KW-0964">Secreted</keyword>
<keyword id="KW-0732">Signal</keyword>
<keyword id="KW-0800">Toxin</keyword>
<organism>
    <name type="scientific">Conus leopardus</name>
    <name type="common">Leopard cone</name>
    <dbReference type="NCBI Taxonomy" id="101306"/>
    <lineage>
        <taxon>Eukaryota</taxon>
        <taxon>Metazoa</taxon>
        <taxon>Spiralia</taxon>
        <taxon>Lophotrochozoa</taxon>
        <taxon>Mollusca</taxon>
        <taxon>Gastropoda</taxon>
        <taxon>Caenogastropoda</taxon>
        <taxon>Neogastropoda</taxon>
        <taxon>Conoidea</taxon>
        <taxon>Conidae</taxon>
        <taxon>Conus</taxon>
        <taxon>Lithoconus</taxon>
    </lineage>
</organism>
<accession>P0C906</accession>
<feature type="signal peptide" evidence="1">
    <location>
        <begin position="1"/>
        <end position="22"/>
    </location>
</feature>
<feature type="propeptide" id="PRO_0000368012" evidence="4">
    <location>
        <begin position="23"/>
        <end position="48"/>
    </location>
</feature>
<feature type="peptide" id="PRO_0000368013" description="Conotoxin Leo-T1" evidence="4">
    <location>
        <begin position="51"/>
        <end position="61"/>
    </location>
</feature>
<proteinExistence type="inferred from homology"/>
<sequence>MRCLPVFIILLLLIPSAPSVDAQPKTEDDVPLASLHDNAKLTLQGLWDKRCCPNLFYCCPDRRK</sequence>
<protein>
    <recommendedName>
        <fullName evidence="2">Conotoxin Leo-T1</fullName>
    </recommendedName>
</protein>
<dbReference type="EMBL" id="EF467314">
    <property type="status" value="NOT_ANNOTATED_CDS"/>
    <property type="molecule type" value="Genomic_DNA"/>
</dbReference>
<dbReference type="ConoServer" id="3013">
    <property type="toxin name" value="Lp5.3 precursor"/>
</dbReference>
<dbReference type="GO" id="GO:0005576">
    <property type="term" value="C:extracellular region"/>
    <property type="evidence" value="ECO:0007669"/>
    <property type="project" value="UniProtKB-SubCell"/>
</dbReference>
<dbReference type="GO" id="GO:0090729">
    <property type="term" value="F:toxin activity"/>
    <property type="evidence" value="ECO:0007669"/>
    <property type="project" value="UniProtKB-KW"/>
</dbReference>
<dbReference type="InterPro" id="IPR031565">
    <property type="entry name" value="T-conotoxin"/>
</dbReference>
<dbReference type="Pfam" id="PF16981">
    <property type="entry name" value="Chi-conotoxin"/>
    <property type="match status" value="1"/>
</dbReference>
<comment type="subcellular location">
    <subcellularLocation>
        <location evidence="4">Secreted</location>
    </subcellularLocation>
</comment>
<comment type="tissue specificity">
    <text evidence="4">Expressed by the venom duct.</text>
</comment>
<comment type="domain">
    <text evidence="3">The cysteine framework is V (CC-CC).</text>
</comment>
<comment type="PTM">
    <text evidence="3">Contains 2 disulfide bonds that can be either 'C1-C3, C2-C4' or 'C1-C4, C2-C3', since these disulfide connectivities have been observed for conotoxins with cysteine framework V (for examples, see AC P0DQQ7 and AC P81755).</text>
</comment>
<comment type="similarity">
    <text evidence="3">Belongs to the conotoxin T superfamily.</text>
</comment>
<evidence type="ECO:0000255" key="1"/>
<evidence type="ECO:0000303" key="2">
    <source>
    </source>
</evidence>
<evidence type="ECO:0000305" key="3"/>
<evidence type="ECO:0000305" key="4">
    <source>
    </source>
</evidence>
<name>CT11_CONLE</name>
<reference key="1">
    <citation type="journal article" date="2008" name="Mol. Ecol.">
        <title>Evolution of ecological specialization and venom of a predatory marine gastropod.</title>
        <authorList>
            <person name="Remigio E.A."/>
            <person name="Duda T.F. Jr."/>
        </authorList>
    </citation>
    <scope>NUCLEOTIDE SEQUENCE [GENOMIC DNA]</scope>
</reference>